<sequence length="37" mass="4204">MIEVFLFGIVLGLIPITLAGLFVTAYLQYRRGDQLDF</sequence>
<dbReference type="EMBL" id="AP009371">
    <property type="protein sequence ID" value="BAF50216.1"/>
    <property type="molecule type" value="Genomic_DNA"/>
</dbReference>
<dbReference type="RefSeq" id="YP_001123392.1">
    <property type="nucleotide sequence ID" value="NC_009270.1"/>
</dbReference>
<dbReference type="SMR" id="A4QKL1"/>
<dbReference type="GeneID" id="4961639"/>
<dbReference type="GO" id="GO:0009535">
    <property type="term" value="C:chloroplast thylakoid membrane"/>
    <property type="evidence" value="ECO:0007669"/>
    <property type="project" value="UniProtKB-SubCell"/>
</dbReference>
<dbReference type="GO" id="GO:0009512">
    <property type="term" value="C:cytochrome b6f complex"/>
    <property type="evidence" value="ECO:0007669"/>
    <property type="project" value="InterPro"/>
</dbReference>
<dbReference type="GO" id="GO:0045158">
    <property type="term" value="F:electron transporter, transferring electrons within cytochrome b6/f complex of photosystem II activity"/>
    <property type="evidence" value="ECO:0007669"/>
    <property type="project" value="UniProtKB-UniRule"/>
</dbReference>
<dbReference type="GO" id="GO:0017004">
    <property type="term" value="P:cytochrome complex assembly"/>
    <property type="evidence" value="ECO:0007669"/>
    <property type="project" value="UniProtKB-UniRule"/>
</dbReference>
<dbReference type="GO" id="GO:0015979">
    <property type="term" value="P:photosynthesis"/>
    <property type="evidence" value="ECO:0007669"/>
    <property type="project" value="UniProtKB-KW"/>
</dbReference>
<dbReference type="HAMAP" id="MF_00432">
    <property type="entry name" value="Cytb6_f_PetG"/>
    <property type="match status" value="1"/>
</dbReference>
<dbReference type="InterPro" id="IPR003683">
    <property type="entry name" value="Cyt_6/f_cplx_su5"/>
</dbReference>
<dbReference type="InterPro" id="IPR036099">
    <property type="entry name" value="Cyt_6/f_cplx_su5_sf"/>
</dbReference>
<dbReference type="NCBIfam" id="NF001907">
    <property type="entry name" value="PRK00665.1"/>
    <property type="match status" value="1"/>
</dbReference>
<dbReference type="Pfam" id="PF02529">
    <property type="entry name" value="PetG"/>
    <property type="match status" value="1"/>
</dbReference>
<dbReference type="PIRSF" id="PIRSF000034">
    <property type="entry name" value="Cyt_b6-f_V"/>
    <property type="match status" value="1"/>
</dbReference>
<dbReference type="SUPFAM" id="SSF103446">
    <property type="entry name" value="PetG subunit of the cytochrome b6f complex"/>
    <property type="match status" value="1"/>
</dbReference>
<comment type="function">
    <text evidence="1">Component of the cytochrome b6-f complex, which mediates electron transfer between photosystem II (PSII) and photosystem I (PSI), cyclic electron flow around PSI, and state transitions. PetG is required for either the stability or assembly of the cytochrome b6-f complex.</text>
</comment>
<comment type="subunit">
    <text evidence="1">The 4 large subunits of the cytochrome b6-f complex are cytochrome b6, subunit IV (17 kDa polypeptide, PetD), cytochrome f and the Rieske protein, while the 4 small subunits are PetG, PetL, PetM and PetN. The complex functions as a dimer.</text>
</comment>
<comment type="subcellular location">
    <subcellularLocation>
        <location evidence="1">Plastid</location>
        <location evidence="1">Chloroplast thylakoid membrane</location>
        <topology evidence="1">Single-pass membrane protein</topology>
    </subcellularLocation>
</comment>
<comment type="similarity">
    <text evidence="1">Belongs to the PetG family.</text>
</comment>
<proteinExistence type="inferred from homology"/>
<gene>
    <name evidence="1" type="primary">petG</name>
</gene>
<organism>
    <name type="scientific">Capsella bursa-pastoris</name>
    <name type="common">Shepherd's purse</name>
    <name type="synonym">Thlaspi bursa-pastoris</name>
    <dbReference type="NCBI Taxonomy" id="3719"/>
    <lineage>
        <taxon>Eukaryota</taxon>
        <taxon>Viridiplantae</taxon>
        <taxon>Streptophyta</taxon>
        <taxon>Embryophyta</taxon>
        <taxon>Tracheophyta</taxon>
        <taxon>Spermatophyta</taxon>
        <taxon>Magnoliopsida</taxon>
        <taxon>eudicotyledons</taxon>
        <taxon>Gunneridae</taxon>
        <taxon>Pentapetalae</taxon>
        <taxon>rosids</taxon>
        <taxon>malvids</taxon>
        <taxon>Brassicales</taxon>
        <taxon>Brassicaceae</taxon>
        <taxon>Camelineae</taxon>
        <taxon>Capsella</taxon>
    </lineage>
</organism>
<name>PETG_CAPBU</name>
<geneLocation type="chloroplast"/>
<keyword id="KW-0150">Chloroplast</keyword>
<keyword id="KW-0249">Electron transport</keyword>
<keyword id="KW-0472">Membrane</keyword>
<keyword id="KW-0602">Photosynthesis</keyword>
<keyword id="KW-0934">Plastid</keyword>
<keyword id="KW-0793">Thylakoid</keyword>
<keyword id="KW-0812">Transmembrane</keyword>
<keyword id="KW-1133">Transmembrane helix</keyword>
<keyword id="KW-0813">Transport</keyword>
<evidence type="ECO:0000255" key="1">
    <source>
        <dbReference type="HAMAP-Rule" id="MF_00432"/>
    </source>
</evidence>
<reference key="1">
    <citation type="submission" date="2007-03" db="EMBL/GenBank/DDBJ databases">
        <title>Sequencing analysis of Capsella bursa-pastoris JO22 chloroplast DNA.</title>
        <authorList>
            <person name="Hosouchi T."/>
            <person name="Tsuruoka H."/>
            <person name="Kotani H."/>
        </authorList>
    </citation>
    <scope>NUCLEOTIDE SEQUENCE [LARGE SCALE GENOMIC DNA]</scope>
</reference>
<accession>A4QKL1</accession>
<protein>
    <recommendedName>
        <fullName evidence="1">Cytochrome b6-f complex subunit 5</fullName>
    </recommendedName>
    <alternativeName>
        <fullName evidence="1">Cytochrome b6-f complex subunit PetG</fullName>
    </alternativeName>
    <alternativeName>
        <fullName evidence="1">Cytochrome b6-f complex subunit V</fullName>
    </alternativeName>
</protein>
<feature type="chain" id="PRO_0000355373" description="Cytochrome b6-f complex subunit 5">
    <location>
        <begin position="1"/>
        <end position="37"/>
    </location>
</feature>
<feature type="transmembrane region" description="Helical" evidence="1">
    <location>
        <begin position="5"/>
        <end position="25"/>
    </location>
</feature>